<evidence type="ECO:0000250" key="1"/>
<evidence type="ECO:0000305" key="2"/>
<comment type="function">
    <text evidence="1">Negatively regulates transcription of bacterial ribonucleotide reductase nrd genes and operons by binding to NrdR-boxes.</text>
</comment>
<comment type="similarity">
    <text evidence="2">Belongs to the NrdR family.</text>
</comment>
<comment type="caution">
    <text evidence="2">Lacks the conserved Cys in position 6 which is part of a zinc-finger along with Cys-3, Cys 31 and Cys-34.</text>
</comment>
<feature type="chain" id="PRO_0000182369" description="Transcriptional repressor NrdR">
    <location>
        <begin position="1"/>
        <end position="160"/>
    </location>
</feature>
<feature type="domain" description="ATP-cone">
    <location>
        <begin position="49"/>
        <end position="139"/>
    </location>
</feature>
<sequence>MQCPSYQNTDSRVLESRAADGGRSVRRRRECLNCEFRFTTYERVETVPITVIKRNGNREIFSRSKLLHGLNRACEKTGLDASRLETLVEELELKLQQRSGREVSSAEIGELVLVELKQMSEVAYIRFASVYRQFQGIDDFVSTLETMNRKAGPGHLAAVG</sequence>
<dbReference type="EMBL" id="BX569694">
    <property type="protein sequence ID" value="CAE08499.1"/>
    <property type="molecule type" value="Genomic_DNA"/>
</dbReference>
<dbReference type="RefSeq" id="WP_011128842.1">
    <property type="nucleotide sequence ID" value="NC_005070.1"/>
</dbReference>
<dbReference type="SMR" id="Q7U4S9"/>
<dbReference type="STRING" id="84588.SYNW1984"/>
<dbReference type="KEGG" id="syw:SYNW1984"/>
<dbReference type="eggNOG" id="COG1327">
    <property type="taxonomic scope" value="Bacteria"/>
</dbReference>
<dbReference type="HOGENOM" id="CLU_108412_0_0_3"/>
<dbReference type="Proteomes" id="UP000001422">
    <property type="component" value="Chromosome"/>
</dbReference>
<dbReference type="GO" id="GO:0005524">
    <property type="term" value="F:ATP binding"/>
    <property type="evidence" value="ECO:0007669"/>
    <property type="project" value="UniProtKB-KW"/>
</dbReference>
<dbReference type="GO" id="GO:0003677">
    <property type="term" value="F:DNA binding"/>
    <property type="evidence" value="ECO:0007669"/>
    <property type="project" value="UniProtKB-KW"/>
</dbReference>
<dbReference type="GO" id="GO:0008270">
    <property type="term" value="F:zinc ion binding"/>
    <property type="evidence" value="ECO:0007669"/>
    <property type="project" value="InterPro"/>
</dbReference>
<dbReference type="GO" id="GO:0045892">
    <property type="term" value="P:negative regulation of DNA-templated transcription"/>
    <property type="evidence" value="ECO:0007669"/>
    <property type="project" value="UniProtKB-UniRule"/>
</dbReference>
<dbReference type="HAMAP" id="MF_00440">
    <property type="entry name" value="NrdR"/>
    <property type="match status" value="1"/>
</dbReference>
<dbReference type="InterPro" id="IPR005144">
    <property type="entry name" value="ATP-cone_dom"/>
</dbReference>
<dbReference type="InterPro" id="IPR055173">
    <property type="entry name" value="NrdR-like_N"/>
</dbReference>
<dbReference type="InterPro" id="IPR003796">
    <property type="entry name" value="RNR_NrdR-like"/>
</dbReference>
<dbReference type="NCBIfam" id="TIGR00244">
    <property type="entry name" value="transcriptional regulator NrdR"/>
    <property type="match status" value="1"/>
</dbReference>
<dbReference type="PANTHER" id="PTHR30455">
    <property type="entry name" value="TRANSCRIPTIONAL REPRESSOR NRDR"/>
    <property type="match status" value="1"/>
</dbReference>
<dbReference type="PANTHER" id="PTHR30455:SF2">
    <property type="entry name" value="TRANSCRIPTIONAL REPRESSOR NRDR"/>
    <property type="match status" value="1"/>
</dbReference>
<dbReference type="Pfam" id="PF03477">
    <property type="entry name" value="ATP-cone"/>
    <property type="match status" value="1"/>
</dbReference>
<dbReference type="Pfam" id="PF22811">
    <property type="entry name" value="Zn_ribbon_NrdR"/>
    <property type="match status" value="1"/>
</dbReference>
<dbReference type="PROSITE" id="PS51161">
    <property type="entry name" value="ATP_CONE"/>
    <property type="match status" value="1"/>
</dbReference>
<gene>
    <name type="primary">nrdR</name>
    <name type="ordered locus">SYNW1984</name>
</gene>
<name>NRDR_PARMW</name>
<proteinExistence type="inferred from homology"/>
<organism>
    <name type="scientific">Parasynechococcus marenigrum (strain WH8102)</name>
    <dbReference type="NCBI Taxonomy" id="84588"/>
    <lineage>
        <taxon>Bacteria</taxon>
        <taxon>Bacillati</taxon>
        <taxon>Cyanobacteriota</taxon>
        <taxon>Cyanophyceae</taxon>
        <taxon>Synechococcales</taxon>
        <taxon>Prochlorococcaceae</taxon>
        <taxon>Parasynechococcus</taxon>
        <taxon>Parasynechococcus marenigrum</taxon>
    </lineage>
</organism>
<reference key="1">
    <citation type="journal article" date="2003" name="Nature">
        <title>The genome of a motile marine Synechococcus.</title>
        <authorList>
            <person name="Palenik B."/>
            <person name="Brahamsha B."/>
            <person name="Larimer F.W."/>
            <person name="Land M.L."/>
            <person name="Hauser L."/>
            <person name="Chain P."/>
            <person name="Lamerdin J.E."/>
            <person name="Regala W."/>
            <person name="Allen E.E."/>
            <person name="McCarren J."/>
            <person name="Paulsen I.T."/>
            <person name="Dufresne A."/>
            <person name="Partensky F."/>
            <person name="Webb E.A."/>
            <person name="Waterbury J."/>
        </authorList>
    </citation>
    <scope>NUCLEOTIDE SEQUENCE [LARGE SCALE GENOMIC DNA]</scope>
    <source>
        <strain>WH8102</strain>
    </source>
</reference>
<protein>
    <recommendedName>
        <fullName>Transcriptional repressor NrdR</fullName>
    </recommendedName>
</protein>
<accession>Q7U4S9</accession>
<keyword id="KW-0067">ATP-binding</keyword>
<keyword id="KW-0238">DNA-binding</keyword>
<keyword id="KW-0547">Nucleotide-binding</keyword>
<keyword id="KW-0678">Repressor</keyword>
<keyword id="KW-0804">Transcription</keyword>
<keyword id="KW-0805">Transcription regulation</keyword>